<name>DTD_HERAR</name>
<comment type="function">
    <text evidence="1">An aminoacyl-tRNA editing enzyme that deacylates mischarged D-aminoacyl-tRNAs. Also deacylates mischarged glycyl-tRNA(Ala), protecting cells against glycine mischarging by AlaRS. Acts via tRNA-based rather than protein-based catalysis; rejects L-amino acids rather than detecting D-amino acids in the active site. By recycling D-aminoacyl-tRNA to D-amino acids and free tRNA molecules, this enzyme counteracts the toxicity associated with the formation of D-aminoacyl-tRNA entities in vivo and helps enforce protein L-homochirality.</text>
</comment>
<comment type="catalytic activity">
    <reaction evidence="1">
        <text>glycyl-tRNA(Ala) + H2O = tRNA(Ala) + glycine + H(+)</text>
        <dbReference type="Rhea" id="RHEA:53744"/>
        <dbReference type="Rhea" id="RHEA-COMP:9657"/>
        <dbReference type="Rhea" id="RHEA-COMP:13640"/>
        <dbReference type="ChEBI" id="CHEBI:15377"/>
        <dbReference type="ChEBI" id="CHEBI:15378"/>
        <dbReference type="ChEBI" id="CHEBI:57305"/>
        <dbReference type="ChEBI" id="CHEBI:78442"/>
        <dbReference type="ChEBI" id="CHEBI:78522"/>
        <dbReference type="EC" id="3.1.1.96"/>
    </reaction>
</comment>
<comment type="catalytic activity">
    <reaction evidence="1">
        <text>a D-aminoacyl-tRNA + H2O = a tRNA + a D-alpha-amino acid + H(+)</text>
        <dbReference type="Rhea" id="RHEA:13953"/>
        <dbReference type="Rhea" id="RHEA-COMP:10123"/>
        <dbReference type="Rhea" id="RHEA-COMP:10124"/>
        <dbReference type="ChEBI" id="CHEBI:15377"/>
        <dbReference type="ChEBI" id="CHEBI:15378"/>
        <dbReference type="ChEBI" id="CHEBI:59871"/>
        <dbReference type="ChEBI" id="CHEBI:78442"/>
        <dbReference type="ChEBI" id="CHEBI:79333"/>
        <dbReference type="EC" id="3.1.1.96"/>
    </reaction>
</comment>
<comment type="subunit">
    <text evidence="1">Homodimer.</text>
</comment>
<comment type="subcellular location">
    <subcellularLocation>
        <location evidence="1">Cytoplasm</location>
    </subcellularLocation>
</comment>
<comment type="domain">
    <text evidence="1">A Gly-cisPro motif from one monomer fits into the active site of the other monomer to allow specific chiral rejection of L-amino acids.</text>
</comment>
<comment type="similarity">
    <text evidence="1">Belongs to the DTD family.</text>
</comment>
<evidence type="ECO:0000255" key="1">
    <source>
        <dbReference type="HAMAP-Rule" id="MF_00518"/>
    </source>
</evidence>
<reference key="1">
    <citation type="journal article" date="2007" name="PLoS Genet.">
        <title>A tale of two oxidation states: bacterial colonization of arsenic-rich environments.</title>
        <authorList>
            <person name="Muller D."/>
            <person name="Medigue C."/>
            <person name="Koechler S."/>
            <person name="Barbe V."/>
            <person name="Barakat M."/>
            <person name="Talla E."/>
            <person name="Bonnefoy V."/>
            <person name="Krin E."/>
            <person name="Arsene-Ploetze F."/>
            <person name="Carapito C."/>
            <person name="Chandler M."/>
            <person name="Cournoyer B."/>
            <person name="Cruveiller S."/>
            <person name="Dossat C."/>
            <person name="Duval S."/>
            <person name="Heymann M."/>
            <person name="Leize E."/>
            <person name="Lieutaud A."/>
            <person name="Lievremont D."/>
            <person name="Makita Y."/>
            <person name="Mangenot S."/>
            <person name="Nitschke W."/>
            <person name="Ortet P."/>
            <person name="Perdrial N."/>
            <person name="Schoepp B."/>
            <person name="Siguier P."/>
            <person name="Simeonova D.D."/>
            <person name="Rouy Z."/>
            <person name="Segurens B."/>
            <person name="Turlin E."/>
            <person name="Vallenet D."/>
            <person name="van Dorsselaer A."/>
            <person name="Weiss S."/>
            <person name="Weissenbach J."/>
            <person name="Lett M.-C."/>
            <person name="Danchin A."/>
            <person name="Bertin P.N."/>
        </authorList>
    </citation>
    <scope>NUCLEOTIDE SEQUENCE [LARGE SCALE GENOMIC DNA]</scope>
    <source>
        <strain>ULPAs1</strain>
    </source>
</reference>
<feature type="chain" id="PRO_1000050839" description="D-aminoacyl-tRNA deacylase">
    <location>
        <begin position="1"/>
        <end position="149"/>
    </location>
</feature>
<feature type="short sequence motif" description="Gly-cisPro motif, important for rejection of L-amino acids" evidence="1">
    <location>
        <begin position="137"/>
        <end position="138"/>
    </location>
</feature>
<keyword id="KW-0963">Cytoplasm</keyword>
<keyword id="KW-0378">Hydrolase</keyword>
<keyword id="KW-1185">Reference proteome</keyword>
<keyword id="KW-0694">RNA-binding</keyword>
<keyword id="KW-0820">tRNA-binding</keyword>
<protein>
    <recommendedName>
        <fullName evidence="1">D-aminoacyl-tRNA deacylase</fullName>
        <shortName evidence="1">DTD</shortName>
        <ecNumber evidence="1">3.1.1.96</ecNumber>
    </recommendedName>
    <alternativeName>
        <fullName evidence="1">Gly-tRNA(Ala) deacylase</fullName>
    </alternativeName>
</protein>
<organism>
    <name type="scientific">Herminiimonas arsenicoxydans</name>
    <dbReference type="NCBI Taxonomy" id="204773"/>
    <lineage>
        <taxon>Bacteria</taxon>
        <taxon>Pseudomonadati</taxon>
        <taxon>Pseudomonadota</taxon>
        <taxon>Betaproteobacteria</taxon>
        <taxon>Burkholderiales</taxon>
        <taxon>Oxalobacteraceae</taxon>
        <taxon>Herminiimonas</taxon>
    </lineage>
</organism>
<gene>
    <name evidence="1" type="primary">dtd</name>
    <name type="ordered locus">HEAR0249</name>
</gene>
<accession>A4G1U1</accession>
<proteinExistence type="inferred from homology"/>
<sequence>MIALLQRVTRASVVVNDVTIGAIGAGLMVLLCAERGDTPKEADALLGKLLAYRVFADDAGKMNRSVTDVAGGVLLVPQFTLAADTCSGTRPSFTPAAAPELARSLFDYFVAQAVQRHVQVATGEFGADMQVSLTNDGPVTFWLQVKPAI</sequence>
<dbReference type="EC" id="3.1.1.96" evidence="1"/>
<dbReference type="EMBL" id="CU207211">
    <property type="protein sequence ID" value="CAL60478.1"/>
    <property type="molecule type" value="Genomic_DNA"/>
</dbReference>
<dbReference type="SMR" id="A4G1U1"/>
<dbReference type="STRING" id="204773.HEAR0249"/>
<dbReference type="KEGG" id="har:HEAR0249"/>
<dbReference type="eggNOG" id="COG1490">
    <property type="taxonomic scope" value="Bacteria"/>
</dbReference>
<dbReference type="HOGENOM" id="CLU_076901_1_1_4"/>
<dbReference type="OrthoDB" id="9801395at2"/>
<dbReference type="Proteomes" id="UP000006697">
    <property type="component" value="Chromosome"/>
</dbReference>
<dbReference type="GO" id="GO:0005737">
    <property type="term" value="C:cytoplasm"/>
    <property type="evidence" value="ECO:0007669"/>
    <property type="project" value="UniProtKB-SubCell"/>
</dbReference>
<dbReference type="GO" id="GO:0051500">
    <property type="term" value="F:D-tyrosyl-tRNA(Tyr) deacylase activity"/>
    <property type="evidence" value="ECO:0007669"/>
    <property type="project" value="TreeGrafter"/>
</dbReference>
<dbReference type="GO" id="GO:0106026">
    <property type="term" value="F:Gly-tRNA(Ala) deacylase activity"/>
    <property type="evidence" value="ECO:0007669"/>
    <property type="project" value="UniProtKB-UniRule"/>
</dbReference>
<dbReference type="GO" id="GO:0043908">
    <property type="term" value="F:Ser(Gly)-tRNA(Ala) hydrolase activity"/>
    <property type="evidence" value="ECO:0007669"/>
    <property type="project" value="UniProtKB-UniRule"/>
</dbReference>
<dbReference type="GO" id="GO:0000049">
    <property type="term" value="F:tRNA binding"/>
    <property type="evidence" value="ECO:0007669"/>
    <property type="project" value="UniProtKB-UniRule"/>
</dbReference>
<dbReference type="GO" id="GO:0019478">
    <property type="term" value="P:D-amino acid catabolic process"/>
    <property type="evidence" value="ECO:0007669"/>
    <property type="project" value="UniProtKB-UniRule"/>
</dbReference>
<dbReference type="CDD" id="cd00563">
    <property type="entry name" value="Dtyr_deacylase"/>
    <property type="match status" value="1"/>
</dbReference>
<dbReference type="FunFam" id="3.50.80.10:FF:000001">
    <property type="entry name" value="D-aminoacyl-tRNA deacylase"/>
    <property type="match status" value="1"/>
</dbReference>
<dbReference type="Gene3D" id="3.50.80.10">
    <property type="entry name" value="D-tyrosyl-tRNA(Tyr) deacylase"/>
    <property type="match status" value="1"/>
</dbReference>
<dbReference type="HAMAP" id="MF_00518">
    <property type="entry name" value="Deacylase_Dtd"/>
    <property type="match status" value="1"/>
</dbReference>
<dbReference type="InterPro" id="IPR003732">
    <property type="entry name" value="Daa-tRNA_deacyls_DTD"/>
</dbReference>
<dbReference type="InterPro" id="IPR023509">
    <property type="entry name" value="DTD-like_sf"/>
</dbReference>
<dbReference type="NCBIfam" id="TIGR00256">
    <property type="entry name" value="D-aminoacyl-tRNA deacylase"/>
    <property type="match status" value="1"/>
</dbReference>
<dbReference type="PANTHER" id="PTHR10472:SF5">
    <property type="entry name" value="D-AMINOACYL-TRNA DEACYLASE 1"/>
    <property type="match status" value="1"/>
</dbReference>
<dbReference type="PANTHER" id="PTHR10472">
    <property type="entry name" value="D-TYROSYL-TRNA TYR DEACYLASE"/>
    <property type="match status" value="1"/>
</dbReference>
<dbReference type="Pfam" id="PF02580">
    <property type="entry name" value="Tyr_Deacylase"/>
    <property type="match status" value="1"/>
</dbReference>
<dbReference type="SUPFAM" id="SSF69500">
    <property type="entry name" value="DTD-like"/>
    <property type="match status" value="1"/>
</dbReference>